<reference key="1">
    <citation type="journal article" date="1989" name="Plant Mol. Biol.">
        <title>Cloning and sequence analysis of cDNAs encoding the cytosolic precursors of subunits GapA and GapB of chloroplast glyceraldehyde-3-phosphate dehydrogenase from pea and spinach.</title>
        <authorList>
            <person name="Brinkmann H."/>
            <person name="Cerff R."/>
            <person name="Salomon M."/>
            <person name="Soll J."/>
        </authorList>
    </citation>
    <scope>NUCLEOTIDE SEQUENCE [MRNA]</scope>
    <source>
        <tissue>Seedling</tissue>
    </source>
</reference>
<reference key="2">
    <citation type="journal article" date="1996" name="Plant Mol. Biol.">
        <title>Functional studies of chloroplast glyceraldehyde-3-phosphate dehydrogenase subunits A and B expressed in Escherichia coli: formation of highly active A4 and B4 homotetramers and evidence that aggregation of the B4 complex is mediated by the B subunit carboxy terminus.</title>
        <authorList>
            <person name="Baalmann E."/>
            <person name="Scheibe R."/>
            <person name="Cerff R."/>
            <person name="Martin W."/>
        </authorList>
    </citation>
    <scope>NUCLEOTIDE SEQUENCE [MRNA]</scope>
</reference>
<reference key="3">
    <citation type="journal article" date="1990" name="Biochim. Biophys. Acta">
        <title>Chloroplast glyceraldehyde-3-phosphate dehydrogenase (NADP): amino acid sequence of the subunits from isoenzyme I and structural relationship with isoenzyme II.</title>
        <authorList>
            <person name="Ferri G."/>
            <person name="Stoppini M."/>
            <person name="Meloni M.L."/>
            <person name="Zapponi M.C."/>
            <person name="Iadarola P."/>
        </authorList>
    </citation>
    <scope>PROTEIN SEQUENCE OF 83-451</scope>
</reference>
<reference key="4">
    <citation type="journal article" date="2007" name="Proc. Natl. Acad. Sci. U.S.A.">
        <title>Molecular mechanism of thioredoxin regulation in photosynthetic A2B2-glyceraldehyde-3-phosphate dehydrogenase.</title>
        <authorList>
            <person name="Fermani S."/>
            <person name="Sparla F."/>
            <person name="Falini G."/>
            <person name="Martelli P.L."/>
            <person name="Casadio R."/>
            <person name="Pupillo P."/>
            <person name="Ripamonti A."/>
            <person name="Trost P."/>
        </authorList>
    </citation>
    <scope>X-RAY CRYSTALLOGRAPHY (3.60 ANGSTROMS) OF 84-451 IN COMPLEX WITH NADP</scope>
    <scope>SUBUNIT</scope>
</reference>
<sequence length="451" mass="48126">MASHAALAPSRIPASTRLASKASQQYSFLTQCSFKRLDVADFSGLRSSNSVTFTREASFHDVIAAQLTTKPTGAAPVRGETVAKLKVAINGFGRIGRNFLRCWHGRKDSPLDVVVVNDSGGVKSATHLLKYDSILGTFKADVKIIDNETFSIDGKPIKVVSNRDPLKLPWAELGIDIVIEGTGVFVDGPGAGKHIQAGAKKVIITAPAKGSDIPTYVVGVNEKDYGHDVANIISNASCTTNCLAPFVKVLDEELGIVKGTMTTTHSYTGDQRLLDASHRDLRRARAAALNIVPTSTGAAKAVSLVLPQLKGKLNGIALRVPTPNVSVVDLVVNIEKVGVTAEDVNNAFRKAAAGPLKGVLDVCDIPLVSVDFRCSDFSSTIDSSLTMVMGGDMVKVVAWYDNEWGYSQRVVDLADLVANKWPGLEGSVASGDPLEDFCKDNPADEECKLYE</sequence>
<proteinExistence type="evidence at protein level"/>
<name>G3PB_SPIOL</name>
<evidence type="ECO:0000250" key="1"/>
<evidence type="ECO:0000255" key="2">
    <source>
        <dbReference type="PROSITE-ProRule" id="PRU10009"/>
    </source>
</evidence>
<evidence type="ECO:0000269" key="3">
    <source>
    </source>
</evidence>
<evidence type="ECO:0000305" key="4"/>
<feature type="transit peptide" description="Chloroplast">
    <location>
        <begin position="1"/>
        <end position="83"/>
    </location>
</feature>
<feature type="chain" id="PRO_0000010426" description="Glyceraldehyde-3-phosphate dehydrogenase B, chloroplastic">
    <location>
        <begin position="84"/>
        <end position="451"/>
    </location>
</feature>
<feature type="active site" description="Nucleophile" evidence="2">
    <location>
        <position position="238"/>
    </location>
</feature>
<feature type="binding site" evidence="3">
    <location>
        <begin position="94"/>
        <end position="95"/>
    </location>
    <ligand>
        <name>NADP(+)</name>
        <dbReference type="ChEBI" id="CHEBI:58349"/>
    </ligand>
</feature>
<feature type="binding site" evidence="3">
    <location>
        <position position="118"/>
    </location>
    <ligand>
        <name>NADP(+)</name>
        <dbReference type="ChEBI" id="CHEBI:58349"/>
    </ligand>
</feature>
<feature type="binding site" evidence="3">
    <location>
        <position position="163"/>
    </location>
    <ligand>
        <name>NADP(+)</name>
        <dbReference type="ChEBI" id="CHEBI:58349"/>
    </ligand>
</feature>
<feature type="binding site" evidence="1">
    <location>
        <begin position="237"/>
        <end position="239"/>
    </location>
    <ligand>
        <name>D-glyceraldehyde 3-phosphate</name>
        <dbReference type="ChEBI" id="CHEBI:59776"/>
    </ligand>
</feature>
<feature type="binding site" evidence="1">
    <location>
        <position position="268"/>
    </location>
    <ligand>
        <name>D-glyceraldehyde 3-phosphate</name>
        <dbReference type="ChEBI" id="CHEBI:59776"/>
    </ligand>
</feature>
<feature type="binding site" evidence="1">
    <location>
        <position position="283"/>
    </location>
    <ligand>
        <name>D-glyceraldehyde 3-phosphate</name>
        <dbReference type="ChEBI" id="CHEBI:59776"/>
    </ligand>
</feature>
<feature type="binding site" evidence="1">
    <location>
        <begin position="296"/>
        <end position="297"/>
    </location>
    <ligand>
        <name>D-glyceraldehyde 3-phosphate</name>
        <dbReference type="ChEBI" id="CHEBI:59776"/>
    </ligand>
</feature>
<feature type="binding site" evidence="1">
    <location>
        <position position="319"/>
    </location>
    <ligand>
        <name>D-glyceraldehyde 3-phosphate</name>
        <dbReference type="ChEBI" id="CHEBI:59776"/>
    </ligand>
</feature>
<feature type="binding site" evidence="3">
    <location>
        <position position="402"/>
    </location>
    <ligand>
        <name>NADP(+)</name>
        <dbReference type="ChEBI" id="CHEBI:58349"/>
    </ligand>
</feature>
<feature type="site" description="Activates thiol group during catalysis" evidence="1">
    <location>
        <position position="265"/>
    </location>
</feature>
<protein>
    <recommendedName>
        <fullName>Glyceraldehyde-3-phosphate dehydrogenase B, chloroplastic</fullName>
        <ecNumber>1.2.1.13</ecNumber>
    </recommendedName>
    <alternativeName>
        <fullName>NADP-dependent glyceraldehydephosphate dehydrogenase subunit B</fullName>
    </alternativeName>
</protein>
<gene>
    <name type="primary">GAPB</name>
    <name type="synonym">GPB1</name>
</gene>
<accession>P12860</accession>
<dbReference type="EC" id="1.2.1.13"/>
<dbReference type="EMBL" id="X15189">
    <property type="protein sequence ID" value="CAA33263.1"/>
    <property type="molecule type" value="mRNA"/>
</dbReference>
<dbReference type="EMBL" id="L76553">
    <property type="protein sequence ID" value="AAD10218.1"/>
    <property type="molecule type" value="mRNA"/>
</dbReference>
<dbReference type="PIR" id="S05553">
    <property type="entry name" value="DESPGB"/>
</dbReference>
<dbReference type="PDB" id="2PKQ">
    <property type="method" value="X-ray"/>
    <property type="resolution" value="3.60 A"/>
    <property type="chains" value="O/Q/T=84-451"/>
</dbReference>
<dbReference type="PDB" id="7Q53">
    <property type="method" value="EM"/>
    <property type="resolution" value="6.30 A"/>
    <property type="chains" value="O/Q=84-422"/>
</dbReference>
<dbReference type="PDB" id="7Q54">
    <property type="method" value="EM"/>
    <property type="resolution" value="8.90 A"/>
    <property type="chains" value="A/C/O/Q=1-451"/>
</dbReference>
<dbReference type="PDB" id="7Q55">
    <property type="method" value="EM"/>
    <property type="resolution" value="5.70 A"/>
    <property type="chains" value="A/C/E/G/I/K/O/Q=1-451"/>
</dbReference>
<dbReference type="PDB" id="7Q56">
    <property type="method" value="EM"/>
    <property type="resolution" value="7.10 A"/>
    <property type="chains" value="A/C/E/G/I/K/O/Q=84-451"/>
</dbReference>
<dbReference type="PDB" id="7Q57">
    <property type="method" value="EM"/>
    <property type="resolution" value="13.00 A"/>
    <property type="chains" value="A/C/E/G/I/K/M/O/Q/S=1-451"/>
</dbReference>
<dbReference type="PDBsum" id="2PKQ"/>
<dbReference type="PDBsum" id="7Q53"/>
<dbReference type="PDBsum" id="7Q54"/>
<dbReference type="PDBsum" id="7Q55"/>
<dbReference type="PDBsum" id="7Q56"/>
<dbReference type="PDBsum" id="7Q57"/>
<dbReference type="EMDB" id="EMD-13824"/>
<dbReference type="EMDB" id="EMD-13825"/>
<dbReference type="EMDB" id="EMD-13826"/>
<dbReference type="EMDB" id="EMD-13827"/>
<dbReference type="EMDB" id="EMD-13828"/>
<dbReference type="SMR" id="P12860"/>
<dbReference type="DIP" id="DIP-34904N"/>
<dbReference type="IntAct" id="P12860">
    <property type="interactions" value="2"/>
</dbReference>
<dbReference type="SABIO-RK" id="P12860"/>
<dbReference type="UniPathway" id="UPA00116"/>
<dbReference type="EvolutionaryTrace" id="P12860"/>
<dbReference type="Proteomes" id="UP001155700">
    <property type="component" value="Unplaced"/>
</dbReference>
<dbReference type="GO" id="GO:0009507">
    <property type="term" value="C:chloroplast"/>
    <property type="evidence" value="ECO:0007669"/>
    <property type="project" value="UniProtKB-SubCell"/>
</dbReference>
<dbReference type="GO" id="GO:0004365">
    <property type="term" value="F:glyceraldehyde-3-phosphate dehydrogenase (NAD+) (phosphorylating) activity"/>
    <property type="evidence" value="ECO:0000318"/>
    <property type="project" value="GO_Central"/>
</dbReference>
<dbReference type="GO" id="GO:0047100">
    <property type="term" value="F:glyceraldehyde-3-phosphate dehydrogenase (NADP+) (phosphorylating) activity"/>
    <property type="evidence" value="ECO:0007669"/>
    <property type="project" value="UniProtKB-EC"/>
</dbReference>
<dbReference type="GO" id="GO:0051287">
    <property type="term" value="F:NAD binding"/>
    <property type="evidence" value="ECO:0000318"/>
    <property type="project" value="GO_Central"/>
</dbReference>
<dbReference type="GO" id="GO:0050661">
    <property type="term" value="F:NADP binding"/>
    <property type="evidence" value="ECO:0007669"/>
    <property type="project" value="InterPro"/>
</dbReference>
<dbReference type="GO" id="GO:0006006">
    <property type="term" value="P:glucose metabolic process"/>
    <property type="evidence" value="ECO:0000318"/>
    <property type="project" value="GO_Central"/>
</dbReference>
<dbReference type="GO" id="GO:0019253">
    <property type="term" value="P:reductive pentose-phosphate cycle"/>
    <property type="evidence" value="ECO:0007669"/>
    <property type="project" value="UniProtKB-UniPathway"/>
</dbReference>
<dbReference type="CDD" id="cd18126">
    <property type="entry name" value="GAPDH_I_C"/>
    <property type="match status" value="1"/>
</dbReference>
<dbReference type="CDD" id="cd05214">
    <property type="entry name" value="GAPDH_I_N"/>
    <property type="match status" value="1"/>
</dbReference>
<dbReference type="FunFam" id="3.30.360.10:FF:000002">
    <property type="entry name" value="Glyceraldehyde-3-phosphate dehydrogenase"/>
    <property type="match status" value="1"/>
</dbReference>
<dbReference type="FunFam" id="3.40.50.720:FF:000001">
    <property type="entry name" value="Glyceraldehyde-3-phosphate dehydrogenase"/>
    <property type="match status" value="1"/>
</dbReference>
<dbReference type="Gene3D" id="3.30.360.10">
    <property type="entry name" value="Dihydrodipicolinate Reductase, domain 2"/>
    <property type="match status" value="1"/>
</dbReference>
<dbReference type="Gene3D" id="3.40.50.720">
    <property type="entry name" value="NAD(P)-binding Rossmann-like Domain"/>
    <property type="match status" value="1"/>
</dbReference>
<dbReference type="InterPro" id="IPR020831">
    <property type="entry name" value="GlycerAld/Erythrose_P_DH"/>
</dbReference>
<dbReference type="InterPro" id="IPR020830">
    <property type="entry name" value="GlycerAld_3-P_DH_AS"/>
</dbReference>
<dbReference type="InterPro" id="IPR020829">
    <property type="entry name" value="GlycerAld_3-P_DH_cat"/>
</dbReference>
<dbReference type="InterPro" id="IPR020828">
    <property type="entry name" value="GlycerAld_3-P_DH_NAD(P)-bd"/>
</dbReference>
<dbReference type="InterPro" id="IPR006424">
    <property type="entry name" value="Glyceraldehyde-3-P_DH_1"/>
</dbReference>
<dbReference type="InterPro" id="IPR036291">
    <property type="entry name" value="NAD(P)-bd_dom_sf"/>
</dbReference>
<dbReference type="NCBIfam" id="TIGR01534">
    <property type="entry name" value="GAPDH-I"/>
    <property type="match status" value="1"/>
</dbReference>
<dbReference type="PANTHER" id="PTHR43148">
    <property type="entry name" value="GLYCERALDEHYDE-3-PHOSPHATE DEHYDROGENASE 2"/>
    <property type="match status" value="1"/>
</dbReference>
<dbReference type="Pfam" id="PF02800">
    <property type="entry name" value="Gp_dh_C"/>
    <property type="match status" value="1"/>
</dbReference>
<dbReference type="Pfam" id="PF00044">
    <property type="entry name" value="Gp_dh_N"/>
    <property type="match status" value="1"/>
</dbReference>
<dbReference type="PRINTS" id="PR00078">
    <property type="entry name" value="G3PDHDRGNASE"/>
</dbReference>
<dbReference type="SMART" id="SM00846">
    <property type="entry name" value="Gp_dh_N"/>
    <property type="match status" value="1"/>
</dbReference>
<dbReference type="SUPFAM" id="SSF55347">
    <property type="entry name" value="Glyceraldehyde-3-phosphate dehydrogenase-like, C-terminal domain"/>
    <property type="match status" value="1"/>
</dbReference>
<dbReference type="SUPFAM" id="SSF51735">
    <property type="entry name" value="NAD(P)-binding Rossmann-fold domains"/>
    <property type="match status" value="1"/>
</dbReference>
<dbReference type="PROSITE" id="PS00071">
    <property type="entry name" value="GAPDH"/>
    <property type="match status" value="1"/>
</dbReference>
<keyword id="KW-0002">3D-structure</keyword>
<keyword id="KW-0113">Calvin cycle</keyword>
<keyword id="KW-0150">Chloroplast</keyword>
<keyword id="KW-0903">Direct protein sequencing</keyword>
<keyword id="KW-0521">NADP</keyword>
<keyword id="KW-0560">Oxidoreductase</keyword>
<keyword id="KW-0934">Plastid</keyword>
<keyword id="KW-1185">Reference proteome</keyword>
<keyword id="KW-0809">Transit peptide</keyword>
<organism>
    <name type="scientific">Spinacia oleracea</name>
    <name type="common">Spinach</name>
    <dbReference type="NCBI Taxonomy" id="3562"/>
    <lineage>
        <taxon>Eukaryota</taxon>
        <taxon>Viridiplantae</taxon>
        <taxon>Streptophyta</taxon>
        <taxon>Embryophyta</taxon>
        <taxon>Tracheophyta</taxon>
        <taxon>Spermatophyta</taxon>
        <taxon>Magnoliopsida</taxon>
        <taxon>eudicotyledons</taxon>
        <taxon>Gunneridae</taxon>
        <taxon>Pentapetalae</taxon>
        <taxon>Caryophyllales</taxon>
        <taxon>Chenopodiaceae</taxon>
        <taxon>Chenopodioideae</taxon>
        <taxon>Anserineae</taxon>
        <taxon>Spinacia</taxon>
    </lineage>
</organism>
<comment type="catalytic activity">
    <reaction>
        <text>D-glyceraldehyde 3-phosphate + phosphate + NADP(+) = (2R)-3-phospho-glyceroyl phosphate + NADPH + H(+)</text>
        <dbReference type="Rhea" id="RHEA:10296"/>
        <dbReference type="ChEBI" id="CHEBI:15378"/>
        <dbReference type="ChEBI" id="CHEBI:43474"/>
        <dbReference type="ChEBI" id="CHEBI:57604"/>
        <dbReference type="ChEBI" id="CHEBI:57783"/>
        <dbReference type="ChEBI" id="CHEBI:58349"/>
        <dbReference type="ChEBI" id="CHEBI:59776"/>
        <dbReference type="EC" id="1.2.1.13"/>
    </reaction>
</comment>
<comment type="pathway">
    <text>Carbohydrate biosynthesis; Calvin cycle.</text>
</comment>
<comment type="subunit">
    <text evidence="3">Tetramer of either four A chains (GAPDH 2) or two A and two B chains (GAPDH 1).</text>
</comment>
<comment type="subcellular location">
    <subcellularLocation>
        <location evidence="1">Plastid</location>
        <location evidence="1">Chloroplast</location>
    </subcellularLocation>
</comment>
<comment type="miscellaneous">
    <text>Plants contain two types of GAPDH: cytosolic forms which participate in glycolysis and chloroplast forms which participate in photosynthesis. All the forms are encoded by distinct genes.</text>
</comment>
<comment type="similarity">
    <text evidence="4">Belongs to the glyceraldehyde-3-phosphate dehydrogenase family.</text>
</comment>